<reference key="1">
    <citation type="journal article" date="1997" name="J. Clin. Endocrinol. Metab.">
        <title>Cloning and expression of the glucocorticoid receptor from the squirrel monkey (Saimiri boliviensis boliviensis), a glucocorticoid-resistant primate.</title>
        <authorList>
            <person name="Reynolds P.D."/>
            <person name="Pittler S.J."/>
            <person name="Scammell J.G."/>
        </authorList>
    </citation>
    <scope>NUCLEOTIDE SEQUENCE [MRNA]</scope>
    <source>
        <tissue>Liver</tissue>
    </source>
</reference>
<gene>
    <name type="primary">NR3C1</name>
    <name type="synonym">GRL</name>
</gene>
<sequence>MDSKESLTPGKEENPSSVLTQERGNVMDFSKILRGGATLKVSVSSTSLAAASQSDSKQQRLLVDFPKGSVSNAQQPDLSKAVSLSMGLYMGETETKVMGNDLGFPQQGQISLSSGETDLQLLEESIANLNRSTSVPENPKSSASSSVSAAPKEKEFPKTHSDVSSEQQNLKGQTGTNGGNVKLYTADQSTFDILQDLEFSSGSPGKETNQSPWRSDLLIDENCLLSPLAGEEDSFLLEGNSNEDCKPLILPDTKPKIKDNGDLVLSSSSNVTLPQVKTEKEDFIELCTPGVIKQEKLSTVYCQASFPGANVIGNKMSAISIHGVSTSGGQMYHYDMNTASLSQQQDQKPIFNVIPPIPVGSENWNRCQGSGDDNLTSLGTLNFPGRTVFSNGYSSPSMRPDVSSPPSSSSTATTGPPPKLCLVCSDEASGCHYGVLTCGSCKVFFKRAVEGQHNYLCAGRNDCIIDKIRRKNCPACRYRKCLQAGMNLEARKTKKKIKGIQQATTGVSQETSENPANKTIVPATLPQLTPTLVSLLEVIEPEVLYAGYDSTVPDSTWRIMTTLNMLGGRQVIAAVKWAKAIPGFRNLHLDDQMTLLQYSWMFLMAFALGWRSYRQASSNLLCFAPDLIINEQRMTLPCMYDQCKHMLYVSSELHRLQVSYEEYLCMKTLLLLSSVPKDGLKSQELFDEIRMTYIKELGKAIVKREGNSSQNWQRFYQLTKLLDSMHEVVENLLNYCFQTFLDKTMSIEFPEMLAEIITNQLPKYSNGNIKKLLFHQK</sequence>
<keyword id="KW-0007">Acetylation</keyword>
<keyword id="KW-0156">Chromatin regulator</keyword>
<keyword id="KW-0158">Chromosome</keyword>
<keyword id="KW-0963">Cytoplasm</keyword>
<keyword id="KW-0206">Cytoskeleton</keyword>
<keyword id="KW-0238">DNA-binding</keyword>
<keyword id="KW-1017">Isopeptide bond</keyword>
<keyword id="KW-0446">Lipid-binding</keyword>
<keyword id="KW-0479">Metal-binding</keyword>
<keyword id="KW-0488">Methylation</keyword>
<keyword id="KW-0496">Mitochondrion</keyword>
<keyword id="KW-0539">Nucleus</keyword>
<keyword id="KW-0597">Phosphoprotein</keyword>
<keyword id="KW-0675">Receptor</keyword>
<keyword id="KW-1185">Reference proteome</keyword>
<keyword id="KW-0754">Steroid-binding</keyword>
<keyword id="KW-0804">Transcription</keyword>
<keyword id="KW-0805">Transcription regulation</keyword>
<keyword id="KW-0832">Ubl conjugation</keyword>
<keyword id="KW-0862">Zinc</keyword>
<keyword id="KW-0863">Zinc-finger</keyword>
<dbReference type="EMBL" id="U87952">
    <property type="protein sequence ID" value="AAC51132.1"/>
    <property type="molecule type" value="mRNA"/>
</dbReference>
<dbReference type="RefSeq" id="NP_001295462.1">
    <property type="nucleotide sequence ID" value="NM_001308533.1"/>
</dbReference>
<dbReference type="SMR" id="P79686"/>
<dbReference type="STRING" id="37293.ENSANAP00000019086"/>
<dbReference type="GeneID" id="105722339"/>
<dbReference type="KEGG" id="anan:105722339"/>
<dbReference type="CTD" id="2908"/>
<dbReference type="OrthoDB" id="5789523at2759"/>
<dbReference type="Proteomes" id="UP000233020">
    <property type="component" value="Whole Genome Shotgun Assembly"/>
</dbReference>
<dbReference type="GO" id="GO:0005813">
    <property type="term" value="C:centrosome"/>
    <property type="evidence" value="ECO:0007669"/>
    <property type="project" value="UniProtKB-SubCell"/>
</dbReference>
<dbReference type="GO" id="GO:0005694">
    <property type="term" value="C:chromosome"/>
    <property type="evidence" value="ECO:0007669"/>
    <property type="project" value="UniProtKB-SubCell"/>
</dbReference>
<dbReference type="GO" id="GO:0005737">
    <property type="term" value="C:cytoplasm"/>
    <property type="evidence" value="ECO:0000250"/>
    <property type="project" value="UniProtKB"/>
</dbReference>
<dbReference type="GO" id="GO:0005739">
    <property type="term" value="C:mitochondrion"/>
    <property type="evidence" value="ECO:0007669"/>
    <property type="project" value="UniProtKB-SubCell"/>
</dbReference>
<dbReference type="GO" id="GO:0016607">
    <property type="term" value="C:nuclear speck"/>
    <property type="evidence" value="ECO:0000250"/>
    <property type="project" value="UniProtKB"/>
</dbReference>
<dbReference type="GO" id="GO:0005634">
    <property type="term" value="C:nucleus"/>
    <property type="evidence" value="ECO:0000250"/>
    <property type="project" value="UniProtKB"/>
</dbReference>
<dbReference type="GO" id="GO:0005819">
    <property type="term" value="C:spindle"/>
    <property type="evidence" value="ECO:0007669"/>
    <property type="project" value="UniProtKB-SubCell"/>
</dbReference>
<dbReference type="GO" id="GO:0003700">
    <property type="term" value="F:DNA-binding transcription factor activity"/>
    <property type="evidence" value="ECO:0000250"/>
    <property type="project" value="UniProtKB"/>
</dbReference>
<dbReference type="GO" id="GO:0004883">
    <property type="term" value="F:nuclear glucocorticoid receptor activity"/>
    <property type="evidence" value="ECO:0007669"/>
    <property type="project" value="InterPro"/>
</dbReference>
<dbReference type="GO" id="GO:0004879">
    <property type="term" value="F:nuclear receptor activity"/>
    <property type="evidence" value="ECO:0000250"/>
    <property type="project" value="UniProtKB"/>
</dbReference>
<dbReference type="GO" id="GO:0043565">
    <property type="term" value="F:sequence-specific DNA binding"/>
    <property type="evidence" value="ECO:0007669"/>
    <property type="project" value="InterPro"/>
</dbReference>
<dbReference type="GO" id="GO:0005496">
    <property type="term" value="F:steroid binding"/>
    <property type="evidence" value="ECO:0000250"/>
    <property type="project" value="UniProtKB"/>
</dbReference>
<dbReference type="GO" id="GO:1990239">
    <property type="term" value="F:steroid hormone binding"/>
    <property type="evidence" value="ECO:0000250"/>
    <property type="project" value="UniProtKB"/>
</dbReference>
<dbReference type="GO" id="GO:0008270">
    <property type="term" value="F:zinc ion binding"/>
    <property type="evidence" value="ECO:0007669"/>
    <property type="project" value="UniProtKB-KW"/>
</dbReference>
<dbReference type="GO" id="GO:0071385">
    <property type="term" value="P:cellular response to glucocorticoid stimulus"/>
    <property type="evidence" value="ECO:0000250"/>
    <property type="project" value="UniProtKB"/>
</dbReference>
<dbReference type="GO" id="GO:0071383">
    <property type="term" value="P:cellular response to steroid hormone stimulus"/>
    <property type="evidence" value="ECO:0000250"/>
    <property type="project" value="UniProtKB"/>
</dbReference>
<dbReference type="GO" id="GO:0006325">
    <property type="term" value="P:chromatin organization"/>
    <property type="evidence" value="ECO:0007669"/>
    <property type="project" value="UniProtKB-KW"/>
</dbReference>
<dbReference type="GO" id="GO:0045944">
    <property type="term" value="P:positive regulation of transcription by RNA polymerase II"/>
    <property type="evidence" value="ECO:0000250"/>
    <property type="project" value="UniProtKB"/>
</dbReference>
<dbReference type="CDD" id="cd07172">
    <property type="entry name" value="NR_DBD_GR_PR"/>
    <property type="match status" value="1"/>
</dbReference>
<dbReference type="CDD" id="cd07076">
    <property type="entry name" value="NR_LBD_GR"/>
    <property type="match status" value="1"/>
</dbReference>
<dbReference type="FunFam" id="1.10.565.10:FF:000004">
    <property type="entry name" value="Androgen receptor variant"/>
    <property type="match status" value="1"/>
</dbReference>
<dbReference type="FunFam" id="3.30.50.10:FF:000022">
    <property type="entry name" value="glucocorticoid receptor isoform X1"/>
    <property type="match status" value="1"/>
</dbReference>
<dbReference type="Gene3D" id="3.30.50.10">
    <property type="entry name" value="Erythroid Transcription Factor GATA-1, subunit A"/>
    <property type="match status" value="1"/>
</dbReference>
<dbReference type="Gene3D" id="1.10.565.10">
    <property type="entry name" value="Retinoid X Receptor"/>
    <property type="match status" value="1"/>
</dbReference>
<dbReference type="InterPro" id="IPR001409">
    <property type="entry name" value="Glcrtcd_rcpt"/>
</dbReference>
<dbReference type="InterPro" id="IPR035500">
    <property type="entry name" value="NHR-like_dom_sf"/>
</dbReference>
<dbReference type="InterPro" id="IPR000536">
    <property type="entry name" value="Nucl_hrmn_rcpt_lig-bd"/>
</dbReference>
<dbReference type="InterPro" id="IPR050200">
    <property type="entry name" value="Nuclear_hormone_rcpt_NR3"/>
</dbReference>
<dbReference type="InterPro" id="IPR001723">
    <property type="entry name" value="Nuclear_hrmn_rcpt"/>
</dbReference>
<dbReference type="InterPro" id="IPR001628">
    <property type="entry name" value="Znf_hrmn_rcpt"/>
</dbReference>
<dbReference type="InterPro" id="IPR013088">
    <property type="entry name" value="Znf_NHR/GATA"/>
</dbReference>
<dbReference type="PANTHER" id="PTHR48092">
    <property type="entry name" value="KNIRPS-RELATED PROTEIN-RELATED"/>
    <property type="match status" value="1"/>
</dbReference>
<dbReference type="Pfam" id="PF02155">
    <property type="entry name" value="GCR"/>
    <property type="match status" value="1"/>
</dbReference>
<dbReference type="Pfam" id="PF00104">
    <property type="entry name" value="Hormone_recep"/>
    <property type="match status" value="1"/>
</dbReference>
<dbReference type="Pfam" id="PF00105">
    <property type="entry name" value="zf-C4"/>
    <property type="match status" value="1"/>
</dbReference>
<dbReference type="PRINTS" id="PR00528">
    <property type="entry name" value="GLCORTICOIDR"/>
</dbReference>
<dbReference type="PRINTS" id="PR00398">
    <property type="entry name" value="STRDHORMONER"/>
</dbReference>
<dbReference type="PRINTS" id="PR00047">
    <property type="entry name" value="STROIDFINGER"/>
</dbReference>
<dbReference type="SMART" id="SM00430">
    <property type="entry name" value="HOLI"/>
    <property type="match status" value="1"/>
</dbReference>
<dbReference type="SMART" id="SM00399">
    <property type="entry name" value="ZnF_C4"/>
    <property type="match status" value="1"/>
</dbReference>
<dbReference type="SUPFAM" id="SSF57716">
    <property type="entry name" value="Glucocorticoid receptor-like (DNA-binding domain)"/>
    <property type="match status" value="1"/>
</dbReference>
<dbReference type="SUPFAM" id="SSF48508">
    <property type="entry name" value="Nuclear receptor ligand-binding domain"/>
    <property type="match status" value="1"/>
</dbReference>
<dbReference type="PROSITE" id="PS51843">
    <property type="entry name" value="NR_LBD"/>
    <property type="match status" value="1"/>
</dbReference>
<dbReference type="PROSITE" id="PS00031">
    <property type="entry name" value="NUCLEAR_REC_DBD_1"/>
    <property type="match status" value="1"/>
</dbReference>
<dbReference type="PROSITE" id="PS51030">
    <property type="entry name" value="NUCLEAR_REC_DBD_2"/>
    <property type="match status" value="1"/>
</dbReference>
<comment type="function">
    <text evidence="2 4">Receptor for glucocorticoids (GC). Has a dual mode of action: as a transcription factor that binds to glucocorticoid response elements (GRE), both for nuclear and mitochondrial DNA, and as a modulator of other transcription factors. Affects inflammatory responses, cellular proliferation and differentiation in target tissues. Involved in chromatin remodeling. Plays a role in rapid mRNA degradation by binding to the 5' UTR of target mRNAs and interacting with PNRC2 in a ligand-dependent manner which recruits the RNA helicase UPF1 and the mRNA-decapping enzyme DCP1A, leading to RNA decay. Could act as a coactivator for STAT5-dependent transcription upon growth hormone (GH) stimulation and could reveal an essential role of hepatic GR in the control of body growth. Mediates glucocorticoid-induced apoptosis. Promotes accurate chromosome segregation during mitosis. May act as a tumor suppressor. May play a negative role in adipogenesis through the regulation of lipolytic and antilipogenic gene expression.</text>
</comment>
<comment type="subunit">
    <text evidence="2 3 4">Heteromultimeric cytoplasmic complex with HSP90AA1, HSPA1A/HSPA1B, and FKBP5 or another immunophilin such as PPID, STIP1, or the immunophilin homolog PPP5C. Upon ligand binding FKBP5 dissociates from the complex and FKBP4 takes its place, thereby linking the complex to dynein and mediating transport to the nucleus, where the complex dissociates. Probably forms a complex composed of chaperones HSP90 and HSP70, co-chaperones CDC37, PPP5C, TSC1 and client protein TSC2, CDK4, AKT, RAF1 and NR3C1; this complex does not contain co-chaperones STIP1/HOP and PTGES3/p23. Directly interacts with UNC45A. Binds to DNA as a homodimer, and as heterodimer with NR3C2 or the retinoid X receptor. Binds STAT5A and STAT5B homodimers and heterodimers. Interacts with NRIP1, POU2F1, POU2F2 and TRIM28. Interacts with several coactivator complexes, including the SMARCA4 complex, CREBBP/EP300, TADA2L (Ada complex) and p160 coactivators such as NCOA2 and NCOA6. Interaction with BAG1 inhibits transactivation. Interacts with HEXIM1 and TGFB1I1. Interacts with NCOA1. Interacts with NCOA3, SMARCA4, SMARCC1, SMARCD1, and SMARCE1. Interacts with CLOCK, CRY1 and CRY2 in a ligand-dependent fashion. Interacts with CIART. Interacts with RWDD3. Interacts with UBE2I/UBC9 and this interaction is enhanced in the presence of RWDD3. Interacts with GRIP1. Interacts with NR4A3 (via nuclear receptor DNA-binding domain), represses transcription activity of NR4A3 on the POMC promoter Nur response element (NurRE). Directly interacts with PNRC2 to attract and form a complex with UPF1 and DCP1A; the interaction leads to rapid mRNA degradation. Interacts with GSK3B. Interacts with FNIP1 and FNIP2. Interacts (via C-terminus) with HNRNPU (via C-terminus). Interacts with MCM3AP (By similarity). Interacts (via domain NR LBD) with HSP90AA1 and HSP90AB1 (By similarity). In the absence of hormonal ligand, interacts with TACC1 (By similarity). Interacts (via NR LBD domain) with ZNF764 (via KRAB domain); the interaction regulates transcription factor activity of NR3C1 by directing its actions toward certain biologic pathways (By similarity).</text>
</comment>
<comment type="subcellular location">
    <subcellularLocation>
        <location evidence="2">Cytoplasm</location>
    </subcellularLocation>
    <subcellularLocation>
        <location evidence="2">Nucleus</location>
    </subcellularLocation>
    <subcellularLocation>
        <location evidence="2">Mitochondrion</location>
    </subcellularLocation>
    <subcellularLocation>
        <location evidence="2">Cytoplasm</location>
        <location evidence="2">Cytoskeleton</location>
        <location evidence="2">Spindle</location>
    </subcellularLocation>
    <subcellularLocation>
        <location evidence="2">Cytoplasm</location>
        <location evidence="2">Cytoskeleton</location>
        <location evidence="2">Microtubule organizing center</location>
        <location evidence="2">Centrosome</location>
    </subcellularLocation>
    <subcellularLocation>
        <location evidence="4">Chromosome</location>
    </subcellularLocation>
    <subcellularLocation>
        <location evidence="4">Nucleus</location>
        <location evidence="4">Nucleoplasm</location>
    </subcellularLocation>
    <text evidence="2 4">After ligand activation, translocates from the cytoplasm to the nucleus (By similarity). The hormone-occupied receptor undergoes rapid exchange between chromatin and the nucleoplasmic compartment. In the presence of NR1D1 shows a time-dependent subcellular localization, localizing to the cytoplasm at ZT8 and to the nucleus at ZT20. Lacks this diurnal pattern of localization in the absence of NR1D1, localizing to both nucleus and the cytoplasm at ZT8 and ZT20. Upon dexamethasone binding associates with the glucocorticoid response elements of target genes (By similarity).</text>
</comment>
<comment type="domain">
    <text evidence="2">Composed of three domains: a modulating N-terminal domain, a DNA-binding domain and a C-terminal ligand-binding domain. The ligand-binding domain is required for correct chromosome segregation during mitosis although ligand binding is not required.</text>
</comment>
<comment type="PTM">
    <text evidence="1">Acetylation by CLOCK reduces its binding to glucocorticoid response elements and its transcriptional activity.</text>
</comment>
<comment type="PTM">
    <text evidence="2">Increased proteasome-mediated degradation in response to glucocorticoids.</text>
</comment>
<comment type="PTM">
    <text evidence="2 4">Phosphorylated in the absence of hormone; becomes hyperphosphorylated in the presence of glucocorticoid. The Ser-203, Ser-226 and Ser-404-phosphorylated forms are mainly cytoplasmic, and the Ser-211-phosphorylated form is nuclear. Phosphorylation at Ser-211 increases transcriptional activity. Phosphorylation at Ser-203, Ser-226 and Ser-404 decreases signaling capacity. Phosphorylation at Ser-404 may protect from glucocorticoid-induced apoptosis. Phosphorylation at Ser-203 and Ser-211 is not required in regulation of chromosome segregation. May be dephosphorylated by PPP5C, attenuates NR3C1 action.</text>
</comment>
<comment type="PTM">
    <text evidence="4">Ubiquitinated by UBR5, leading to its degradation: UBR5 specifically recognizes and binds ligand-bound NR3C1 when it is not associated with coactivators (NCOAs) (By similarity). In presence of NCOAs, the UBR5-degron is not accessible, preventing its ubiquitination and degradation (By similarity).</text>
</comment>
<comment type="PTM">
    <text evidence="3">Sumoylation at Lys-277 and Lys-293 negatively regulates its transcriptional activity. Sumoylation at Lys-703 positively regulates its transcriptional activity in the presence of RWDD3. Sumoylation at Lys-277 and Lys-293 is dispensable whereas sumoylation at Lys-703 is critical for the stimulatory effect of RWDD3 on its transcriptional activity. Heat shock increases sumoylation in a RWWD3-dependent manner.</text>
</comment>
<comment type="similarity">
    <text evidence="8">Belongs to the nuclear hormone receptor family. NR3 subfamily.</text>
</comment>
<evidence type="ECO:0000250" key="1"/>
<evidence type="ECO:0000250" key="2">
    <source>
        <dbReference type="UniProtKB" id="P04150"/>
    </source>
</evidence>
<evidence type="ECO:0000250" key="3">
    <source>
        <dbReference type="UniProtKB" id="P06536"/>
    </source>
</evidence>
<evidence type="ECO:0000250" key="4">
    <source>
        <dbReference type="UniProtKB" id="P06537"/>
    </source>
</evidence>
<evidence type="ECO:0000255" key="5">
    <source>
        <dbReference type="PROSITE-ProRule" id="PRU00407"/>
    </source>
</evidence>
<evidence type="ECO:0000255" key="6">
    <source>
        <dbReference type="PROSITE-ProRule" id="PRU01189"/>
    </source>
</evidence>
<evidence type="ECO:0000256" key="7">
    <source>
        <dbReference type="SAM" id="MobiDB-lite"/>
    </source>
</evidence>
<evidence type="ECO:0000305" key="8"/>
<feature type="chain" id="PRO_0000053669" description="Glucocorticoid receptor">
    <location>
        <begin position="1"/>
        <end position="777"/>
    </location>
</feature>
<feature type="domain" description="NR LBD" evidence="6">
    <location>
        <begin position="524"/>
        <end position="758"/>
    </location>
</feature>
<feature type="DNA-binding region" description="Nuclear receptor" evidence="5">
    <location>
        <begin position="421"/>
        <end position="486"/>
    </location>
</feature>
<feature type="zinc finger region" description="NR C4-type" evidence="5">
    <location>
        <begin position="421"/>
        <end position="441"/>
    </location>
</feature>
<feature type="zinc finger region" description="NR C4-type" evidence="5">
    <location>
        <begin position="457"/>
        <end position="481"/>
    </location>
</feature>
<feature type="region of interest" description="Modulating">
    <location>
        <begin position="1"/>
        <end position="420"/>
    </location>
</feature>
<feature type="region of interest" description="Disordered" evidence="7">
    <location>
        <begin position="1"/>
        <end position="23"/>
    </location>
</feature>
<feature type="region of interest" description="Disordered" evidence="7">
    <location>
        <begin position="130"/>
        <end position="182"/>
    </location>
</feature>
<feature type="region of interest" description="Disordered" evidence="7">
    <location>
        <begin position="394"/>
        <end position="415"/>
    </location>
</feature>
<feature type="region of interest" description="Interaction with CLOCK" evidence="1">
    <location>
        <begin position="485"/>
        <end position="777"/>
    </location>
</feature>
<feature type="region of interest" description="Hinge">
    <location>
        <begin position="487"/>
        <end position="523"/>
    </location>
</feature>
<feature type="region of interest" description="Interaction with CRY1" evidence="1">
    <location>
        <begin position="532"/>
        <end position="697"/>
    </location>
</feature>
<feature type="compositionally biased region" description="Basic and acidic residues" evidence="7">
    <location>
        <begin position="1"/>
        <end position="14"/>
    </location>
</feature>
<feature type="compositionally biased region" description="Low complexity" evidence="7">
    <location>
        <begin position="134"/>
        <end position="150"/>
    </location>
</feature>
<feature type="compositionally biased region" description="Basic and acidic residues" evidence="7">
    <location>
        <begin position="151"/>
        <end position="163"/>
    </location>
</feature>
<feature type="compositionally biased region" description="Polar residues" evidence="7">
    <location>
        <begin position="164"/>
        <end position="174"/>
    </location>
</feature>
<feature type="compositionally biased region" description="Low complexity" evidence="7">
    <location>
        <begin position="394"/>
        <end position="414"/>
    </location>
</feature>
<feature type="modified residue" description="Phosphothreonine" evidence="2">
    <location>
        <position position="8"/>
    </location>
</feature>
<feature type="modified residue" description="Omega-N-methylarginine" evidence="4">
    <location>
        <position position="23"/>
    </location>
</feature>
<feature type="modified residue" description="Phosphoserine" evidence="2">
    <location>
        <position position="45"/>
    </location>
</feature>
<feature type="modified residue" description="Phosphoserine" evidence="4">
    <location>
        <position position="113"/>
    </location>
</feature>
<feature type="modified residue" description="Phosphoserine" evidence="2">
    <location>
        <position position="134"/>
    </location>
</feature>
<feature type="modified residue" description="Phosphoserine" evidence="4">
    <location>
        <position position="141"/>
    </location>
</feature>
<feature type="modified residue" description="Phosphoserine" evidence="2">
    <location>
        <position position="203"/>
    </location>
</feature>
<feature type="modified residue" description="Phosphoserine" evidence="2">
    <location>
        <position position="211"/>
    </location>
</feature>
<feature type="modified residue" description="Phosphoserine" evidence="2">
    <location>
        <position position="226"/>
    </location>
</feature>
<feature type="modified residue" description="Phosphoserine" evidence="2">
    <location>
        <position position="267"/>
    </location>
</feature>
<feature type="modified residue" description="Phosphoserine" evidence="2">
    <location>
        <position position="404"/>
    </location>
</feature>
<feature type="modified residue" description="N6-acetyllysine" evidence="2">
    <location>
        <position position="480"/>
    </location>
</feature>
<feature type="modified residue" description="N6-acetyllysine" evidence="2">
    <location>
        <position position="492"/>
    </location>
</feature>
<feature type="modified residue" description="N6-acetyllysine" evidence="2">
    <location>
        <position position="494"/>
    </location>
</feature>
<feature type="modified residue" description="N6-acetyllysine" evidence="2">
    <location>
        <position position="495"/>
    </location>
</feature>
<feature type="cross-link" description="Glycyl lysine isopeptide (Lys-Gly) (interchain with G-Cter in SUMO2)" evidence="2">
    <location>
        <position position="258"/>
    </location>
</feature>
<feature type="cross-link" description="Glycyl lysine isopeptide (Lys-Gly) (interchain with G-Cter in SUMO); alternate" evidence="2">
    <location>
        <position position="277"/>
    </location>
</feature>
<feature type="cross-link" description="Glycyl lysine isopeptide (Lys-Gly) (interchain with G-Cter in SUMO2); alternate" evidence="2">
    <location>
        <position position="277"/>
    </location>
</feature>
<feature type="cross-link" description="Glycyl lysine isopeptide (Lys-Gly) (interchain with G-Cter in SUMO); alternate" evidence="2">
    <location>
        <position position="293"/>
    </location>
</feature>
<feature type="cross-link" description="Glycyl lysine isopeptide (Lys-Gly) (interchain with G-Cter in SUMO2); alternate" evidence="2">
    <location>
        <position position="293"/>
    </location>
</feature>
<feature type="cross-link" description="Glycyl lysine isopeptide (Lys-Gly) (interchain with G-Cter in ubiquitin)" evidence="4">
    <location>
        <position position="419"/>
    </location>
</feature>
<feature type="cross-link" description="Glycyl lysine isopeptide (Lys-Gly) (interchain with G-Cter in SUMO)" evidence="2">
    <location>
        <position position="703"/>
    </location>
</feature>
<proteinExistence type="evidence at transcript level"/>
<protein>
    <recommendedName>
        <fullName>Glucocorticoid receptor</fullName>
        <shortName>GR</shortName>
    </recommendedName>
    <alternativeName>
        <fullName>Nuclear receptor subfamily 3 group C member 1</fullName>
    </alternativeName>
</protein>
<organism>
    <name type="scientific">Aotus nancymaae</name>
    <name type="common">Ma's night monkey</name>
    <dbReference type="NCBI Taxonomy" id="37293"/>
    <lineage>
        <taxon>Eukaryota</taxon>
        <taxon>Metazoa</taxon>
        <taxon>Chordata</taxon>
        <taxon>Craniata</taxon>
        <taxon>Vertebrata</taxon>
        <taxon>Euteleostomi</taxon>
        <taxon>Mammalia</taxon>
        <taxon>Eutheria</taxon>
        <taxon>Euarchontoglires</taxon>
        <taxon>Primates</taxon>
        <taxon>Haplorrhini</taxon>
        <taxon>Platyrrhini</taxon>
        <taxon>Aotidae</taxon>
        <taxon>Aotus</taxon>
    </lineage>
</organism>
<name>GCR_AOTNA</name>
<accession>P79686</accession>